<dbReference type="EC" id="1.14.13.39"/>
<dbReference type="EMBL" id="AB071182">
    <property type="protein sequence ID" value="BAB85836.1"/>
    <property type="molecule type" value="mRNA"/>
</dbReference>
<dbReference type="EMBL" id="AB485775">
    <property type="protein sequence ID" value="BAH23563.1"/>
    <property type="molecule type" value="mRNA"/>
</dbReference>
<dbReference type="EMBL" id="AB017521">
    <property type="protein sequence ID" value="BAB33296.1"/>
    <property type="molecule type" value="mRNA"/>
</dbReference>
<dbReference type="RefSeq" id="NP_001036963.1">
    <property type="nucleotide sequence ID" value="NM_001043498.1"/>
</dbReference>
<dbReference type="SMR" id="Q8T8C0"/>
<dbReference type="FunCoup" id="Q8T8C0">
    <property type="interactions" value="161"/>
</dbReference>
<dbReference type="STRING" id="7091.Q8T8C0"/>
<dbReference type="PaxDb" id="7091-BGIBMGA002938-TA"/>
<dbReference type="EnsemblMetazoa" id="GeneID_692510M_001043498.1">
    <property type="protein sequence ID" value="NP_001036963.1"/>
    <property type="gene ID" value="GeneID_692510OS1"/>
</dbReference>
<dbReference type="GeneID" id="692510"/>
<dbReference type="KEGG" id="bmor:692510"/>
<dbReference type="CTD" id="4842"/>
<dbReference type="eggNOG" id="KOG1158">
    <property type="taxonomic scope" value="Eukaryota"/>
</dbReference>
<dbReference type="InParanoid" id="Q8T8C0"/>
<dbReference type="OrthoDB" id="8996at7088"/>
<dbReference type="Proteomes" id="UP000005204">
    <property type="component" value="Unassembled WGS sequence"/>
</dbReference>
<dbReference type="GO" id="GO:0005516">
    <property type="term" value="F:calmodulin binding"/>
    <property type="evidence" value="ECO:0007669"/>
    <property type="project" value="UniProtKB-KW"/>
</dbReference>
<dbReference type="GO" id="GO:0050660">
    <property type="term" value="F:flavin adenine dinucleotide binding"/>
    <property type="evidence" value="ECO:0007669"/>
    <property type="project" value="InterPro"/>
</dbReference>
<dbReference type="GO" id="GO:0010181">
    <property type="term" value="F:FMN binding"/>
    <property type="evidence" value="ECO:0007669"/>
    <property type="project" value="InterPro"/>
</dbReference>
<dbReference type="GO" id="GO:0020037">
    <property type="term" value="F:heme binding"/>
    <property type="evidence" value="ECO:0007669"/>
    <property type="project" value="InterPro"/>
</dbReference>
<dbReference type="GO" id="GO:0046872">
    <property type="term" value="F:metal ion binding"/>
    <property type="evidence" value="ECO:0007669"/>
    <property type="project" value="UniProtKB-KW"/>
</dbReference>
<dbReference type="GO" id="GO:0050661">
    <property type="term" value="F:NADP binding"/>
    <property type="evidence" value="ECO:0007669"/>
    <property type="project" value="InterPro"/>
</dbReference>
<dbReference type="GO" id="GO:0004517">
    <property type="term" value="F:nitric-oxide synthase activity"/>
    <property type="evidence" value="ECO:0007669"/>
    <property type="project" value="UniProtKB-EC"/>
</dbReference>
<dbReference type="GO" id="GO:0006809">
    <property type="term" value="P:nitric oxide biosynthetic process"/>
    <property type="evidence" value="ECO:0007669"/>
    <property type="project" value="InterPro"/>
</dbReference>
<dbReference type="CDD" id="cd00795">
    <property type="entry name" value="NOS_oxygenase_euk"/>
    <property type="match status" value="1"/>
</dbReference>
<dbReference type="FunFam" id="3.90.440.10:FF:000001">
    <property type="entry name" value="Endothelial nitric oxide synthase"/>
    <property type="match status" value="1"/>
</dbReference>
<dbReference type="FunFam" id="1.20.990.10:FF:000002">
    <property type="entry name" value="Nitric oxide synthase"/>
    <property type="match status" value="1"/>
</dbReference>
<dbReference type="FunFam" id="3.40.50.360:FF:000033">
    <property type="entry name" value="Nitric oxide synthase"/>
    <property type="match status" value="1"/>
</dbReference>
<dbReference type="Gene3D" id="3.40.50.360">
    <property type="match status" value="1"/>
</dbReference>
<dbReference type="Gene3D" id="1.20.990.10">
    <property type="entry name" value="NADPH-cytochrome p450 Reductase, Chain A, domain 3"/>
    <property type="match status" value="1"/>
</dbReference>
<dbReference type="Gene3D" id="3.90.340.10">
    <property type="entry name" value="Nitric Oxide Synthase, Chain A, domain 1"/>
    <property type="match status" value="1"/>
</dbReference>
<dbReference type="Gene3D" id="3.90.1230.10">
    <property type="entry name" value="Nitric Oxide Synthase, Chain A, domain 3"/>
    <property type="match status" value="1"/>
</dbReference>
<dbReference type="Gene3D" id="3.90.440.10">
    <property type="entry name" value="Nitric Oxide Synthase,Heme Domain,Chain A domain 2"/>
    <property type="match status" value="1"/>
</dbReference>
<dbReference type="Gene3D" id="3.40.50.80">
    <property type="entry name" value="Nucleotide-binding domain of ferredoxin-NADP reductase (FNR) module"/>
    <property type="match status" value="1"/>
</dbReference>
<dbReference type="Gene3D" id="2.40.30.10">
    <property type="entry name" value="Translation factors"/>
    <property type="match status" value="1"/>
</dbReference>
<dbReference type="InterPro" id="IPR003097">
    <property type="entry name" value="CysJ-like_FAD-binding"/>
</dbReference>
<dbReference type="InterPro" id="IPR017927">
    <property type="entry name" value="FAD-bd_FR_type"/>
</dbReference>
<dbReference type="InterPro" id="IPR001094">
    <property type="entry name" value="Flavdoxin-like"/>
</dbReference>
<dbReference type="InterPro" id="IPR008254">
    <property type="entry name" value="Flavodoxin/NO_synth"/>
</dbReference>
<dbReference type="InterPro" id="IPR001709">
    <property type="entry name" value="Flavoprot_Pyr_Nucl_cyt_Rdtase"/>
</dbReference>
<dbReference type="InterPro" id="IPR029039">
    <property type="entry name" value="Flavoprotein-like_sf"/>
</dbReference>
<dbReference type="InterPro" id="IPR039261">
    <property type="entry name" value="FNR_nucleotide-bd"/>
</dbReference>
<dbReference type="InterPro" id="IPR023173">
    <property type="entry name" value="NADPH_Cyt_P450_Rdtase_alpha"/>
</dbReference>
<dbReference type="InterPro" id="IPR050607">
    <property type="entry name" value="NOS"/>
</dbReference>
<dbReference type="InterPro" id="IPR044943">
    <property type="entry name" value="NOS_dom_1"/>
</dbReference>
<dbReference type="InterPro" id="IPR044940">
    <property type="entry name" value="NOS_dom_2"/>
</dbReference>
<dbReference type="InterPro" id="IPR044944">
    <property type="entry name" value="NOS_dom_3"/>
</dbReference>
<dbReference type="InterPro" id="IPR012144">
    <property type="entry name" value="NOS_euk"/>
</dbReference>
<dbReference type="InterPro" id="IPR004030">
    <property type="entry name" value="NOS_N"/>
</dbReference>
<dbReference type="InterPro" id="IPR036119">
    <property type="entry name" value="NOS_N_sf"/>
</dbReference>
<dbReference type="InterPro" id="IPR001433">
    <property type="entry name" value="OxRdtase_FAD/NAD-bd"/>
</dbReference>
<dbReference type="InterPro" id="IPR017938">
    <property type="entry name" value="Riboflavin_synthase-like_b-brl"/>
</dbReference>
<dbReference type="PANTHER" id="PTHR43410:SF1">
    <property type="entry name" value="NITRIC OXIDE SYNTHASE"/>
    <property type="match status" value="1"/>
</dbReference>
<dbReference type="PANTHER" id="PTHR43410">
    <property type="entry name" value="NITRIC OXIDE SYNTHASE OXYGENASE"/>
    <property type="match status" value="1"/>
</dbReference>
<dbReference type="Pfam" id="PF00667">
    <property type="entry name" value="FAD_binding_1"/>
    <property type="match status" value="1"/>
</dbReference>
<dbReference type="Pfam" id="PF00258">
    <property type="entry name" value="Flavodoxin_1"/>
    <property type="match status" value="1"/>
</dbReference>
<dbReference type="Pfam" id="PF00175">
    <property type="entry name" value="NAD_binding_1"/>
    <property type="match status" value="1"/>
</dbReference>
<dbReference type="Pfam" id="PF02898">
    <property type="entry name" value="NO_synthase"/>
    <property type="match status" value="1"/>
</dbReference>
<dbReference type="PIRSF" id="PIRSF000333">
    <property type="entry name" value="NOS"/>
    <property type="match status" value="1"/>
</dbReference>
<dbReference type="PRINTS" id="PR00369">
    <property type="entry name" value="FLAVODOXIN"/>
</dbReference>
<dbReference type="PRINTS" id="PR00371">
    <property type="entry name" value="FPNCR"/>
</dbReference>
<dbReference type="SUPFAM" id="SSF52343">
    <property type="entry name" value="Ferredoxin reductase-like, C-terminal NADP-linked domain"/>
    <property type="match status" value="1"/>
</dbReference>
<dbReference type="SUPFAM" id="SSF52218">
    <property type="entry name" value="Flavoproteins"/>
    <property type="match status" value="1"/>
</dbReference>
<dbReference type="SUPFAM" id="SSF56512">
    <property type="entry name" value="Nitric oxide (NO) synthase oxygenase domain"/>
    <property type="match status" value="1"/>
</dbReference>
<dbReference type="SUPFAM" id="SSF63380">
    <property type="entry name" value="Riboflavin synthase domain-like"/>
    <property type="match status" value="1"/>
</dbReference>
<dbReference type="PROSITE" id="PS51384">
    <property type="entry name" value="FAD_FR"/>
    <property type="match status" value="1"/>
</dbReference>
<dbReference type="PROSITE" id="PS50902">
    <property type="entry name" value="FLAVODOXIN_LIKE"/>
    <property type="match status" value="1"/>
</dbReference>
<dbReference type="PROSITE" id="PS60001">
    <property type="entry name" value="NOS"/>
    <property type="match status" value="1"/>
</dbReference>
<accession>Q8T8C0</accession>
<accession>Q9BLL0</accession>
<protein>
    <recommendedName>
        <fullName evidence="10">Nitric oxide synthase</fullName>
        <ecNumber>1.14.13.39</ecNumber>
    </recommendedName>
    <alternativeName>
        <fullName>Inducible nitric oxide synthase-like protein</fullName>
    </alternativeName>
</protein>
<gene>
    <name evidence="10" type="primary">NOS</name>
    <name evidence="9" type="synonym">iNOS-LP</name>
</gene>
<proteinExistence type="evidence at transcript level"/>
<evidence type="ECO:0000250" key="1">
    <source>
        <dbReference type="UniProtKB" id="P29474"/>
    </source>
</evidence>
<evidence type="ECO:0000250" key="2">
    <source>
        <dbReference type="UniProtKB" id="P29475"/>
    </source>
</evidence>
<evidence type="ECO:0000255" key="3"/>
<evidence type="ECO:0000255" key="4">
    <source>
        <dbReference type="PROSITE-ProRule" id="PRU00088"/>
    </source>
</evidence>
<evidence type="ECO:0000255" key="5">
    <source>
        <dbReference type="PROSITE-ProRule" id="PRU00716"/>
    </source>
</evidence>
<evidence type="ECO:0000256" key="6">
    <source>
        <dbReference type="SAM" id="MobiDB-lite"/>
    </source>
</evidence>
<evidence type="ECO:0000269" key="7">
    <source>
    </source>
</evidence>
<evidence type="ECO:0000305" key="8"/>
<evidence type="ECO:0000312" key="9">
    <source>
        <dbReference type="EMBL" id="BAB33296.1"/>
    </source>
</evidence>
<evidence type="ECO:0000312" key="10">
    <source>
        <dbReference type="EMBL" id="BAB85836.1"/>
    </source>
</evidence>
<evidence type="ECO:0000312" key="11">
    <source>
        <dbReference type="EMBL" id="BAH23563.1"/>
    </source>
</evidence>
<keyword id="KW-0112">Calmodulin-binding</keyword>
<keyword id="KW-0274">FAD</keyword>
<keyword id="KW-0285">Flavoprotein</keyword>
<keyword id="KW-0288">FMN</keyword>
<keyword id="KW-0349">Heme</keyword>
<keyword id="KW-0408">Iron</keyword>
<keyword id="KW-0479">Metal-binding</keyword>
<keyword id="KW-0521">NADP</keyword>
<keyword id="KW-0560">Oxidoreductase</keyword>
<keyword id="KW-1185">Reference proteome</keyword>
<comment type="function">
    <text evidence="7 8">Produces nitric oxide (NO) which is a messenger molecule with diverse functions throughout the body. Involved in the induction of immune gene expression.</text>
</comment>
<comment type="catalytic activity">
    <reaction>
        <text>2 L-arginine + 3 NADPH + 4 O2 + H(+) = 2 L-citrulline + 2 nitric oxide + 3 NADP(+) + 4 H2O</text>
        <dbReference type="Rhea" id="RHEA:19897"/>
        <dbReference type="ChEBI" id="CHEBI:15377"/>
        <dbReference type="ChEBI" id="CHEBI:15378"/>
        <dbReference type="ChEBI" id="CHEBI:15379"/>
        <dbReference type="ChEBI" id="CHEBI:16480"/>
        <dbReference type="ChEBI" id="CHEBI:32682"/>
        <dbReference type="ChEBI" id="CHEBI:57743"/>
        <dbReference type="ChEBI" id="CHEBI:57783"/>
        <dbReference type="ChEBI" id="CHEBI:58349"/>
        <dbReference type="EC" id="1.14.13.39"/>
    </reaction>
</comment>
<comment type="cofactor">
    <cofactor evidence="2">
        <name>heme b</name>
        <dbReference type="ChEBI" id="CHEBI:60344"/>
    </cofactor>
</comment>
<comment type="cofactor">
    <cofactor evidence="2">
        <name>FAD</name>
        <dbReference type="ChEBI" id="CHEBI:57692"/>
    </cofactor>
    <text evidence="2">Binds 1 FAD.</text>
</comment>
<comment type="cofactor">
    <cofactor evidence="2">
        <name>FMN</name>
        <dbReference type="ChEBI" id="CHEBI:58210"/>
    </cofactor>
    <text evidence="2">Binds 1 FMN.</text>
</comment>
<comment type="activity regulation">
    <text evidence="7">Expression is dependent on and stimulated by NADPH, calcium, BH4 and calmodulin. The activity is not dependent on FAD and is not stimulated by its presence.</text>
</comment>
<comment type="tissue specificity">
    <text evidence="7">Constitutively expressed at a low level in the larval fat body, hemocyte, Malpighian tubule, midgut, silk gland and adult antenna.</text>
</comment>
<comment type="induction">
    <text evidence="7">Induced strongly in the fat body by lipopolysaccharide (LPS).</text>
</comment>
<comment type="similarity">
    <text evidence="3">Belongs to the NOS family.</text>
</comment>
<feature type="chain" id="PRO_0000403313" description="Nitric oxide synthase">
    <location>
        <begin position="1"/>
        <end position="1209"/>
    </location>
</feature>
<feature type="domain" description="Flavodoxin-like" evidence="4">
    <location>
        <begin position="521"/>
        <end position="723"/>
    </location>
</feature>
<feature type="domain" description="FAD-binding FR-type" evidence="5">
    <location>
        <begin position="776"/>
        <end position="1021"/>
    </location>
</feature>
<feature type="region of interest" description="Calmodulin-binding" evidence="2 3">
    <location>
        <begin position="491"/>
        <end position="511"/>
    </location>
</feature>
<feature type="region of interest" description="Disordered" evidence="6">
    <location>
        <begin position="603"/>
        <end position="622"/>
    </location>
</feature>
<feature type="binding site" evidence="1">
    <location>
        <position position="103"/>
    </location>
    <ligand>
        <name>(6R)-L-erythro-5,6,7,8-tetrahydrobiopterin</name>
        <dbReference type="ChEBI" id="CHEBI:59560"/>
    </ligand>
</feature>
<feature type="binding site" description="axial binding residue" evidence="1">
    <location>
        <position position="181"/>
    </location>
    <ligand>
        <name>heme b</name>
        <dbReference type="ChEBI" id="CHEBI:60344"/>
    </ligand>
    <ligandPart>
        <name>Fe</name>
        <dbReference type="ChEBI" id="CHEBI:18248"/>
    </ligandPart>
</feature>
<feature type="binding site" evidence="1">
    <location>
        <position position="244"/>
    </location>
    <ligand>
        <name>L-arginine</name>
        <dbReference type="ChEBI" id="CHEBI:32682"/>
    </ligand>
</feature>
<feature type="binding site" evidence="1">
    <location>
        <position position="353"/>
    </location>
    <ligand>
        <name>L-arginine</name>
        <dbReference type="ChEBI" id="CHEBI:32682"/>
    </ligand>
</feature>
<feature type="binding site" evidence="1">
    <location>
        <position position="354"/>
    </location>
    <ligand>
        <name>L-arginine</name>
        <dbReference type="ChEBI" id="CHEBI:32682"/>
    </ligand>
</feature>
<feature type="binding site" evidence="1">
    <location>
        <position position="358"/>
    </location>
    <ligand>
        <name>L-arginine</name>
        <dbReference type="ChEBI" id="CHEBI:32682"/>
    </ligand>
</feature>
<feature type="binding site" evidence="1">
    <location>
        <position position="363"/>
    </location>
    <ligand>
        <name>L-arginine</name>
        <dbReference type="ChEBI" id="CHEBI:32682"/>
    </ligand>
</feature>
<feature type="binding site" evidence="1">
    <location>
        <position position="444"/>
    </location>
    <ligand>
        <name>(6R)-L-erythro-5,6,7,8-tetrahydrobiopterin</name>
        <dbReference type="ChEBI" id="CHEBI:59560"/>
    </ligand>
</feature>
<feature type="binding site" evidence="1">
    <location>
        <position position="457"/>
    </location>
    <ligand>
        <name>(6R)-L-erythro-5,6,7,8-tetrahydrobiopterin</name>
        <dbReference type="ChEBI" id="CHEBI:59560"/>
    </ligand>
</feature>
<feature type="binding site" evidence="1">
    <location>
        <position position="472"/>
    </location>
    <ligand>
        <name>heme b</name>
        <dbReference type="ChEBI" id="CHEBI:60344"/>
    </ligand>
</feature>
<feature type="binding site" evidence="4">
    <location>
        <begin position="527"/>
        <end position="531"/>
    </location>
    <ligand>
        <name>FMN</name>
        <dbReference type="ChEBI" id="CHEBI:58210"/>
    </ligand>
</feature>
<feature type="binding site" evidence="4">
    <location>
        <begin position="669"/>
        <end position="700"/>
    </location>
    <ligand>
        <name>FMN</name>
        <dbReference type="ChEBI" id="CHEBI:58210"/>
    </ligand>
</feature>
<feature type="binding site" evidence="2">
    <location>
        <begin position="811"/>
        <end position="822"/>
    </location>
    <ligand>
        <name>FAD</name>
        <dbReference type="ChEBI" id="CHEBI:57692"/>
    </ligand>
</feature>
<feature type="binding site" evidence="2">
    <location>
        <begin position="954"/>
        <end position="964"/>
    </location>
    <ligand>
        <name>FAD</name>
        <dbReference type="ChEBI" id="CHEBI:57692"/>
    </ligand>
</feature>
<feature type="binding site" evidence="2">
    <location>
        <begin position="1028"/>
        <end position="1147"/>
    </location>
    <ligand>
        <name>NADP(+)</name>
        <dbReference type="ChEBI" id="CHEBI:58349"/>
    </ligand>
</feature>
<feature type="binding site" evidence="2">
    <location>
        <begin position="1128"/>
        <end position="1143"/>
    </location>
    <ligand>
        <name>NADP(+)</name>
        <dbReference type="ChEBI" id="CHEBI:58349"/>
    </ligand>
</feature>
<feature type="sequence conflict" description="In Ref. 3; BAB33296." evidence="8" ref="3">
    <original>R</original>
    <variation>K</variation>
    <location>
        <position position="157"/>
    </location>
</feature>
<feature type="sequence conflict" description="In Ref. 3; BAB33296." evidence="8" ref="3">
    <original>F</original>
    <variation>L</variation>
    <location>
        <position position="205"/>
    </location>
</feature>
<feature type="sequence conflict" description="In Ref. 3; BAB33296." evidence="8" ref="3">
    <original>T</original>
    <variation>I</variation>
    <location>
        <position position="259"/>
    </location>
</feature>
<feature type="sequence conflict" description="In Ref. 3; BAB33296." evidence="8" ref="3">
    <original>A</original>
    <variation>P</variation>
    <location>
        <position position="332"/>
    </location>
</feature>
<feature type="sequence conflict" description="In Ref. 3; BAB33296." evidence="8" ref="3">
    <original>CG</original>
    <variation>KK</variation>
    <location>
        <begin position="340"/>
        <end position="341"/>
    </location>
</feature>
<feature type="sequence conflict" description="In Ref. 3; BAB33296." evidence="8" ref="3">
    <original>NG</original>
    <variation>KN</variation>
    <location>
        <begin position="351"/>
        <end position="352"/>
    </location>
</feature>
<reference evidence="8 10" key="1">
    <citation type="journal article" date="2002" name="Insect Mol. Biol.">
        <title>cDNA cloning, characterization and gene expression of nitric oxide synthase from the silkworm, Bombyx mori.</title>
        <authorList>
            <person name="Imamura M."/>
            <person name="Yang J."/>
            <person name="Yamakawa M."/>
        </authorList>
    </citation>
    <scope>NUCLEOTIDE SEQUENCE [MRNA]</scope>
    <scope>FUNCTION</scope>
    <scope>ACTIVITY REGULATION</scope>
    <scope>TISSUE SPECIFICITY</scope>
    <scope>INDUCTION</scope>
    <source>
        <strain evidence="7">Tokai X Asahi</strain>
        <tissue evidence="7">Larva</tissue>
    </source>
</reference>
<reference evidence="8 11" key="2">
    <citation type="submission" date="2009-02" db="EMBL/GenBank/DDBJ databases">
        <title>Identification of nitric-oxide synthase from Bombyx mori.</title>
        <authorList>
            <person name="Nagaoka S."/>
            <person name="Takata Y."/>
        </authorList>
    </citation>
    <scope>NUCLEOTIDE SEQUENCE [MRNA]</scope>
    <source>
        <tissue evidence="11">Reproductive system</tissue>
    </source>
</reference>
<reference evidence="8 11" key="3">
    <citation type="submission" date="1998-09" db="EMBL/GenBank/DDBJ databases">
        <title>Inducible nitric oxide synthase-like protein(iNOS-LP) cDNA.</title>
        <authorList>
            <person name="Yang J."/>
            <person name="Taniai K."/>
            <person name="Yamakawa M."/>
        </authorList>
    </citation>
    <scope>NUCLEOTIDE SEQUENCE [MRNA] OF 1-354</scope>
</reference>
<name>NOS_BOMMO</name>
<sequence>MSNFFKICCVKDPGGSAKENLRKMDQVNGHFVSATCPFSGESVELKVDSNQKQVKPNLRIKVPQPIRLKNHVAHDENFDTLHSRINEVTHFNTKCSEKVCQTSIMDIPGRGDTPRTAEEVFKDAQAFLTQYYASIKRENSEAHKARLDEVKRELKERGTYQLKTSELVFGAKLAWRNATRCIGRIQWKKLQIFDCREVTTASGMFEALCNHIKYATNKGNIRSAITIFPQRTDGKHDYRIWNPQLINYAGYQEPDGSITGDPARVEFTEICMKLGWKAPRTPWDILPLVLSADGKDPEFFELPKEIVMEVQFEHPEYDWFKDMGWKWYALPAVSNMRLACGGLEFTANSFNGWYMGTEIGCRNLCDESRLNIVEAVAKKMGLDTNSFVSLWKDKALVEVNIAVLHSFHRDNVSIVDHHSASEQFQKHLENENKSRGGCPADWIWIVPPMSSSLTTVFHQEMALYYIRPSYDYQEPPWKTHQWTKSDGTKTVHRKFHFKQIARAVKFTSKLFGRALSKRIKATILYATETGKSEHYAKELGTIFGHAFNAQVHCMSEYDMFSIEHETLVLIVASTFGNGEPPANGVDFAEHLFQMLYNETNNNRGDGTSDLGSGTFKTPTPKSLMRSNSMMTPSFEYKRQLTRLESNKSSVAGASSIEQIGPLSNVCFAVFGLGSSAYPKFCHFGKTVDKILGDLGGERILELACGDELYGQEQQFRAWSSKIFQVACETFCLDENGMVKDAKKALGDVPLTEETVRFGKYQGDTKLKAALEASFRKQLITCKVKENKNLGDFSADRATVFVDMQPETEFKYDPGDHVGVLACNRKEIVDAVLERMKDVDDYDKTVQLQVMKETLTPTGAIKTWEQHERLPAVTIRQIFTRFLDITTPPSTTVLKYLSKACTDQNDAAQLKELAIDSNKYDDWRHLHYPHLAEVLAQFPSCRPQASLLAALLPSLQPRFYSISSSPLAHPHRIHITCAVVVYRTQNGQGPMHYGVCSTYLQNLKPEDEALVFIRRAPSFHMPKDLSAPLILVGPGSGIAPFRGFWHHRKHQIKNLIPNKQKPGPVWLFFGCRNRGMDLYKEEKEKALADGVLSKVFLALSREDSVEKKHIQTLLEDEGAEISRMLLDENGHFYVCGDCKMAEEVQQKLKEIMKKHAKMTEQEYEEFILNLMDENRYHEDIFGITLRTAEVQSASREFAKRTRQESQKSQT</sequence>
<organism>
    <name type="scientific">Bombyx mori</name>
    <name type="common">Silk moth</name>
    <dbReference type="NCBI Taxonomy" id="7091"/>
    <lineage>
        <taxon>Eukaryota</taxon>
        <taxon>Metazoa</taxon>
        <taxon>Ecdysozoa</taxon>
        <taxon>Arthropoda</taxon>
        <taxon>Hexapoda</taxon>
        <taxon>Insecta</taxon>
        <taxon>Pterygota</taxon>
        <taxon>Neoptera</taxon>
        <taxon>Endopterygota</taxon>
        <taxon>Lepidoptera</taxon>
        <taxon>Glossata</taxon>
        <taxon>Ditrysia</taxon>
        <taxon>Bombycoidea</taxon>
        <taxon>Bombycidae</taxon>
        <taxon>Bombycinae</taxon>
        <taxon>Bombyx</taxon>
    </lineage>
</organism>